<gene>
    <name type="ordered locus">YPO1380</name>
    <name type="ordered locus">y2792.1</name>
    <name type="ordered locus">YP_1213</name>
</gene>
<organism>
    <name type="scientific">Yersinia pestis</name>
    <dbReference type="NCBI Taxonomy" id="632"/>
    <lineage>
        <taxon>Bacteria</taxon>
        <taxon>Pseudomonadati</taxon>
        <taxon>Pseudomonadota</taxon>
        <taxon>Gammaproteobacteria</taxon>
        <taxon>Enterobacterales</taxon>
        <taxon>Yersiniaceae</taxon>
        <taxon>Yersinia</taxon>
    </lineage>
</organism>
<feature type="chain" id="PRO_0000084895" description="Uncharacterized MFS-type transporter YPO1380/y2792.1/YP_1213">
    <location>
        <begin position="1"/>
        <end position="382"/>
    </location>
</feature>
<feature type="transmembrane region" description="Helical" evidence="1">
    <location>
        <begin position="8"/>
        <end position="28"/>
    </location>
</feature>
<feature type="transmembrane region" description="Helical" evidence="1">
    <location>
        <begin position="41"/>
        <end position="61"/>
    </location>
</feature>
<feature type="transmembrane region" description="Helical" evidence="1">
    <location>
        <begin position="73"/>
        <end position="93"/>
    </location>
</feature>
<feature type="transmembrane region" description="Helical" evidence="1">
    <location>
        <begin position="94"/>
        <end position="114"/>
    </location>
</feature>
<feature type="transmembrane region" description="Helical" evidence="1">
    <location>
        <begin position="133"/>
        <end position="153"/>
    </location>
</feature>
<feature type="transmembrane region" description="Helical" evidence="1">
    <location>
        <begin position="157"/>
        <end position="177"/>
    </location>
</feature>
<feature type="transmembrane region" description="Helical" evidence="1">
    <location>
        <begin position="208"/>
        <end position="228"/>
    </location>
</feature>
<feature type="transmembrane region" description="Helical" evidence="1">
    <location>
        <begin position="235"/>
        <end position="255"/>
    </location>
</feature>
<feature type="transmembrane region" description="Helical" evidence="1">
    <location>
        <begin position="265"/>
        <end position="284"/>
    </location>
</feature>
<feature type="transmembrane region" description="Helical" evidence="1">
    <location>
        <begin position="289"/>
        <end position="311"/>
    </location>
</feature>
<feature type="transmembrane region" description="Helical" evidence="1">
    <location>
        <begin position="325"/>
        <end position="345"/>
    </location>
</feature>
<feature type="transmembrane region" description="Helical" evidence="1">
    <location>
        <begin position="349"/>
        <end position="369"/>
    </location>
</feature>
<proteinExistence type="inferred from homology"/>
<keyword id="KW-0997">Cell inner membrane</keyword>
<keyword id="KW-1003">Cell membrane</keyword>
<keyword id="KW-0472">Membrane</keyword>
<keyword id="KW-1185">Reference proteome</keyword>
<keyword id="KW-0812">Transmembrane</keyword>
<keyword id="KW-1133">Transmembrane helix</keyword>
<keyword id="KW-0813">Transport</keyword>
<protein>
    <recommendedName>
        <fullName evidence="1">Uncharacterized MFS-type transporter YPO1380/y2792.1/YP_1213</fullName>
    </recommendedName>
</protein>
<sequence length="382" mass="41687">MSAYSRPVLLLLCGLLLFTISIAVLNTLVPLWLSHQQLPTWQVGMVSSSYFTGNLVGTLIAGRFIQQLGFNRSYHCSCILFALATCGLMLTVDFWSWLGWRFLAGIACALIWVIVESALLRSGTLTNRGQLLAAYMMVYYLGTVIGQLLLGIVSTQLLSVIPWVGALVITAMLPLLFAQFSHQSRHESPPIAVWPMLKRRSARLGINGCIISGVLLGSLYGLLPLYLSHKGMSDASVGGWMALLVSSGIIGQWPMGRMADRYGRLLVLRIQVFVVILGSVAILGNYAMAPALFILGCAGFTLYPVAMAWACEKASADELVAMNQALLMSYTLGSLAGPTMTSLLMQRYSDNLLFIMIAGVAFVYLMMLLRKPDHQQTPYAAV</sequence>
<evidence type="ECO:0000255" key="1">
    <source>
        <dbReference type="HAMAP-Rule" id="MF_01149"/>
    </source>
</evidence>
<evidence type="ECO:0000305" key="2"/>
<name>Y1380_YERPE</name>
<reference key="1">
    <citation type="journal article" date="2001" name="Nature">
        <title>Genome sequence of Yersinia pestis, the causative agent of plague.</title>
        <authorList>
            <person name="Parkhill J."/>
            <person name="Wren B.W."/>
            <person name="Thomson N.R."/>
            <person name="Titball R.W."/>
            <person name="Holden M.T.G."/>
            <person name="Prentice M.B."/>
            <person name="Sebaihia M."/>
            <person name="James K.D."/>
            <person name="Churcher C.M."/>
            <person name="Mungall K.L."/>
            <person name="Baker S."/>
            <person name="Basham D."/>
            <person name="Bentley S.D."/>
            <person name="Brooks K."/>
            <person name="Cerdeno-Tarraga A.-M."/>
            <person name="Chillingworth T."/>
            <person name="Cronin A."/>
            <person name="Davies R.M."/>
            <person name="Davis P."/>
            <person name="Dougan G."/>
            <person name="Feltwell T."/>
            <person name="Hamlin N."/>
            <person name="Holroyd S."/>
            <person name="Jagels K."/>
            <person name="Karlyshev A.V."/>
            <person name="Leather S."/>
            <person name="Moule S."/>
            <person name="Oyston P.C.F."/>
            <person name="Quail M.A."/>
            <person name="Rutherford K.M."/>
            <person name="Simmonds M."/>
            <person name="Skelton J."/>
            <person name="Stevens K."/>
            <person name="Whitehead S."/>
            <person name="Barrell B.G."/>
        </authorList>
    </citation>
    <scope>NUCLEOTIDE SEQUENCE [LARGE SCALE GENOMIC DNA]</scope>
    <source>
        <strain>CO-92 / Biovar Orientalis</strain>
    </source>
</reference>
<reference key="2">
    <citation type="journal article" date="2002" name="J. Bacteriol.">
        <title>Genome sequence of Yersinia pestis KIM.</title>
        <authorList>
            <person name="Deng W."/>
            <person name="Burland V."/>
            <person name="Plunkett G. III"/>
            <person name="Boutin A."/>
            <person name="Mayhew G.F."/>
            <person name="Liss P."/>
            <person name="Perna N.T."/>
            <person name="Rose D.J."/>
            <person name="Mau B."/>
            <person name="Zhou S."/>
            <person name="Schwartz D.C."/>
            <person name="Fetherston J.D."/>
            <person name="Lindler L.E."/>
            <person name="Brubaker R.R."/>
            <person name="Plano G.V."/>
            <person name="Straley S.C."/>
            <person name="McDonough K.A."/>
            <person name="Nilles M.L."/>
            <person name="Matson J.S."/>
            <person name="Blattner F.R."/>
            <person name="Perry R.D."/>
        </authorList>
    </citation>
    <scope>NUCLEOTIDE SEQUENCE [LARGE SCALE GENOMIC DNA]</scope>
    <source>
        <strain>KIM10+ / Biovar Mediaevalis</strain>
    </source>
</reference>
<reference key="3">
    <citation type="journal article" date="2004" name="DNA Res.">
        <title>Complete genome sequence of Yersinia pestis strain 91001, an isolate avirulent to humans.</title>
        <authorList>
            <person name="Song Y."/>
            <person name="Tong Z."/>
            <person name="Wang J."/>
            <person name="Wang L."/>
            <person name="Guo Z."/>
            <person name="Han Y."/>
            <person name="Zhang J."/>
            <person name="Pei D."/>
            <person name="Zhou D."/>
            <person name="Qin H."/>
            <person name="Pang X."/>
            <person name="Han Y."/>
            <person name="Zhai J."/>
            <person name="Li M."/>
            <person name="Cui B."/>
            <person name="Qi Z."/>
            <person name="Jin L."/>
            <person name="Dai R."/>
            <person name="Chen F."/>
            <person name="Li S."/>
            <person name="Ye C."/>
            <person name="Du Z."/>
            <person name="Lin W."/>
            <person name="Wang J."/>
            <person name="Yu J."/>
            <person name="Yang H."/>
            <person name="Wang J."/>
            <person name="Huang P."/>
            <person name="Yang R."/>
        </authorList>
    </citation>
    <scope>NUCLEOTIDE SEQUENCE [LARGE SCALE GENOMIC DNA]</scope>
    <source>
        <strain>91001 / Biovar Mediaevalis</strain>
    </source>
</reference>
<dbReference type="EMBL" id="AL590842">
    <property type="protein sequence ID" value="CAL20032.1"/>
    <property type="molecule type" value="Genomic_DNA"/>
</dbReference>
<dbReference type="EMBL" id="AE009952">
    <property type="status" value="NOT_ANNOTATED_CDS"/>
    <property type="molecule type" value="Genomic_DNA"/>
</dbReference>
<dbReference type="EMBL" id="AE017042">
    <property type="protein sequence ID" value="AAS61456.1"/>
    <property type="molecule type" value="Genomic_DNA"/>
</dbReference>
<dbReference type="PIR" id="AF0168">
    <property type="entry name" value="AF0168"/>
</dbReference>
<dbReference type="RefSeq" id="WP_002211335.1">
    <property type="nucleotide sequence ID" value="NZ_WHKM01000027.1"/>
</dbReference>
<dbReference type="RefSeq" id="YP_002346403.1">
    <property type="nucleotide sequence ID" value="NC_003143.1"/>
</dbReference>
<dbReference type="SMR" id="Q8ZGC3"/>
<dbReference type="STRING" id="214092.YPO1380"/>
<dbReference type="PaxDb" id="214092-YPO1380"/>
<dbReference type="EnsemblBacteria" id="AAS61456">
    <property type="protein sequence ID" value="AAS61456"/>
    <property type="gene ID" value="YP_1213"/>
</dbReference>
<dbReference type="KEGG" id="ype:YPO1380"/>
<dbReference type="KEGG" id="ypm:YP_1213"/>
<dbReference type="PATRIC" id="fig|214092.21.peg.1703"/>
<dbReference type="eggNOG" id="COG2814">
    <property type="taxonomic scope" value="Bacteria"/>
</dbReference>
<dbReference type="HOGENOM" id="CLU_035018_1_2_6"/>
<dbReference type="OMA" id="YLSHQGM"/>
<dbReference type="OrthoDB" id="9810614at2"/>
<dbReference type="Proteomes" id="UP000000815">
    <property type="component" value="Chromosome"/>
</dbReference>
<dbReference type="Proteomes" id="UP000001019">
    <property type="component" value="Chromosome"/>
</dbReference>
<dbReference type="Proteomes" id="UP000002490">
    <property type="component" value="Chromosome"/>
</dbReference>
<dbReference type="GO" id="GO:0005886">
    <property type="term" value="C:plasma membrane"/>
    <property type="evidence" value="ECO:0000318"/>
    <property type="project" value="GO_Central"/>
</dbReference>
<dbReference type="GO" id="GO:0022857">
    <property type="term" value="F:transmembrane transporter activity"/>
    <property type="evidence" value="ECO:0007669"/>
    <property type="project" value="UniProtKB-UniRule"/>
</dbReference>
<dbReference type="CDD" id="cd17477">
    <property type="entry name" value="MFS_YcaD_like"/>
    <property type="match status" value="1"/>
</dbReference>
<dbReference type="FunFam" id="1.20.1250.20:FF:000041">
    <property type="entry name" value="Uncharacterized MFS-type transporter YcaD"/>
    <property type="match status" value="1"/>
</dbReference>
<dbReference type="FunFam" id="1.20.1250.20:FF:000066">
    <property type="entry name" value="Uncharacterized MFS-type transporter YcaD"/>
    <property type="match status" value="1"/>
</dbReference>
<dbReference type="Gene3D" id="1.20.1250.20">
    <property type="entry name" value="MFS general substrate transporter like domains"/>
    <property type="match status" value="2"/>
</dbReference>
<dbReference type="HAMAP" id="MF_01149">
    <property type="entry name" value="MFS_YcaD"/>
    <property type="match status" value="1"/>
</dbReference>
<dbReference type="InterPro" id="IPR011701">
    <property type="entry name" value="MFS"/>
</dbReference>
<dbReference type="InterPro" id="IPR020846">
    <property type="entry name" value="MFS_dom"/>
</dbReference>
<dbReference type="InterPro" id="IPR036259">
    <property type="entry name" value="MFS_trans_sf"/>
</dbReference>
<dbReference type="InterPro" id="IPR023745">
    <property type="entry name" value="MFS_YcaD"/>
</dbReference>
<dbReference type="InterPro" id="IPR047200">
    <property type="entry name" value="MFS_YcaD-like"/>
</dbReference>
<dbReference type="NCBIfam" id="NF002962">
    <property type="entry name" value="PRK03633.1"/>
    <property type="match status" value="1"/>
</dbReference>
<dbReference type="PANTHER" id="PTHR23521">
    <property type="entry name" value="TRANSPORTER MFS SUPERFAMILY"/>
    <property type="match status" value="1"/>
</dbReference>
<dbReference type="PANTHER" id="PTHR23521:SF2">
    <property type="entry name" value="TRANSPORTER MFS SUPERFAMILY"/>
    <property type="match status" value="1"/>
</dbReference>
<dbReference type="Pfam" id="PF07690">
    <property type="entry name" value="MFS_1"/>
    <property type="match status" value="1"/>
</dbReference>
<dbReference type="SUPFAM" id="SSF103473">
    <property type="entry name" value="MFS general substrate transporter"/>
    <property type="match status" value="1"/>
</dbReference>
<dbReference type="PROSITE" id="PS50850">
    <property type="entry name" value="MFS"/>
    <property type="match status" value="1"/>
</dbReference>
<accession>Q8ZGC3</accession>
<accession>Q0WH35</accession>
<comment type="subcellular location">
    <subcellularLocation>
        <location evidence="1">Cell inner membrane</location>
        <topology evidence="1">Multi-pass membrane protein</topology>
    </subcellularLocation>
</comment>
<comment type="similarity">
    <text evidence="1">Belongs to the major facilitator superfamily. YcaD (TC 2.A.1.26) family.</text>
</comment>
<comment type="caution">
    <text evidence="2">PubMed:12142430 (AE009952) sequence differs from that shown due to the presence of an IS100 insertion sequence. This gene in strain KIM5 may, therefore, be a pseudogene.</text>
</comment>